<reference key="1">
    <citation type="journal article" date="2003" name="Proc. Natl. Acad. Sci. U.S.A.">
        <title>Genome sequence of the cyanobacterium Prochlorococcus marinus SS120, a nearly minimal oxyphototrophic genome.</title>
        <authorList>
            <person name="Dufresne A."/>
            <person name="Salanoubat M."/>
            <person name="Partensky F."/>
            <person name="Artiguenave F."/>
            <person name="Axmann I.M."/>
            <person name="Barbe V."/>
            <person name="Duprat S."/>
            <person name="Galperin M.Y."/>
            <person name="Koonin E.V."/>
            <person name="Le Gall F."/>
            <person name="Makarova K.S."/>
            <person name="Ostrowski M."/>
            <person name="Oztas S."/>
            <person name="Robert C."/>
            <person name="Rogozin I.B."/>
            <person name="Scanlan D.J."/>
            <person name="Tandeau de Marsac N."/>
            <person name="Weissenbach J."/>
            <person name="Wincker P."/>
            <person name="Wolf Y.I."/>
            <person name="Hess W.R."/>
        </authorList>
    </citation>
    <scope>NUCLEOTIDE SEQUENCE [LARGE SCALE GENOMIC DNA]</scope>
    <source>
        <strain>SARG / CCMP1375 / SS120</strain>
    </source>
</reference>
<gene>
    <name evidence="1" type="primary">queA</name>
    <name type="ordered locus">Pro_0402</name>
</gene>
<protein>
    <recommendedName>
        <fullName evidence="1">S-adenosylmethionine:tRNA ribosyltransferase-isomerase</fullName>
        <ecNumber evidence="1">2.4.99.17</ecNumber>
    </recommendedName>
    <alternativeName>
        <fullName evidence="1">Queuosine biosynthesis protein QueA</fullName>
    </alternativeName>
</protein>
<comment type="function">
    <text evidence="1">Transfers and isomerizes the ribose moiety from AdoMet to the 7-aminomethyl group of 7-deazaguanine (preQ1-tRNA) to give epoxyqueuosine (oQ-tRNA).</text>
</comment>
<comment type="catalytic activity">
    <reaction evidence="1">
        <text>7-aminomethyl-7-carbaguanosine(34) in tRNA + S-adenosyl-L-methionine = epoxyqueuosine(34) in tRNA + adenine + L-methionine + 2 H(+)</text>
        <dbReference type="Rhea" id="RHEA:32155"/>
        <dbReference type="Rhea" id="RHEA-COMP:10342"/>
        <dbReference type="Rhea" id="RHEA-COMP:18582"/>
        <dbReference type="ChEBI" id="CHEBI:15378"/>
        <dbReference type="ChEBI" id="CHEBI:16708"/>
        <dbReference type="ChEBI" id="CHEBI:57844"/>
        <dbReference type="ChEBI" id="CHEBI:59789"/>
        <dbReference type="ChEBI" id="CHEBI:82833"/>
        <dbReference type="ChEBI" id="CHEBI:194443"/>
        <dbReference type="EC" id="2.4.99.17"/>
    </reaction>
</comment>
<comment type="pathway">
    <text evidence="1">tRNA modification; tRNA-queuosine biosynthesis.</text>
</comment>
<comment type="subunit">
    <text evidence="1">Monomer.</text>
</comment>
<comment type="subcellular location">
    <subcellularLocation>
        <location evidence="1">Cytoplasm</location>
    </subcellularLocation>
</comment>
<comment type="similarity">
    <text evidence="1">Belongs to the QueA family.</text>
</comment>
<proteinExistence type="inferred from homology"/>
<name>QUEA_PROMA</name>
<evidence type="ECO:0000255" key="1">
    <source>
        <dbReference type="HAMAP-Rule" id="MF_00113"/>
    </source>
</evidence>
<accession>Q7VDH4</accession>
<organism>
    <name type="scientific">Prochlorococcus marinus (strain SARG / CCMP1375 / SS120)</name>
    <dbReference type="NCBI Taxonomy" id="167539"/>
    <lineage>
        <taxon>Bacteria</taxon>
        <taxon>Bacillati</taxon>
        <taxon>Cyanobacteriota</taxon>
        <taxon>Cyanophyceae</taxon>
        <taxon>Synechococcales</taxon>
        <taxon>Prochlorococcaceae</taxon>
        <taxon>Prochlorococcus</taxon>
    </lineage>
</organism>
<feature type="chain" id="PRO_0000165422" description="S-adenosylmethionine:tRNA ribosyltransferase-isomerase">
    <location>
        <begin position="1"/>
        <end position="370"/>
    </location>
</feature>
<keyword id="KW-0963">Cytoplasm</keyword>
<keyword id="KW-0671">Queuosine biosynthesis</keyword>
<keyword id="KW-1185">Reference proteome</keyword>
<keyword id="KW-0949">S-adenosyl-L-methionine</keyword>
<keyword id="KW-0808">Transferase</keyword>
<sequence>MVIDPRDFLLSSYDYELNSSLIAQEPIEPRHNARMLHVSKRSGEGLKAFHLKVWDLLAELRAGDLLVMNDTRVLKARLKVRLRNGTFVELFLLEPKGQGRWLCLAKPAKKLRAGDCIWMESSGEESIPLKIIDQDISTGGRIVQFPELFSDRRKIEPLLEKFGEIPLPPYINRCDFKDVNRYQTRYASTPGAVAAPTAGLHLSDQFLEALSQQGIKDAKVTLHVGLGTFRPLVEENLANLHLHSEWVEVKEEVVSAIKECRDRGGRVIAIGTTTVRSLEASFLAGDGCLKPFKGEVDLVIKPGYKFGIVDGLLTNFHLPKSSLLLLVSALIGRENLLELYKEAIDQKYRFFSYGDAMFISPEGVLPSARL</sequence>
<dbReference type="EC" id="2.4.99.17" evidence="1"/>
<dbReference type="EMBL" id="AE017126">
    <property type="protein sequence ID" value="AAP99448.1"/>
    <property type="molecule type" value="Genomic_DNA"/>
</dbReference>
<dbReference type="RefSeq" id="NP_874796.1">
    <property type="nucleotide sequence ID" value="NC_005042.1"/>
</dbReference>
<dbReference type="RefSeq" id="WP_011124557.1">
    <property type="nucleotide sequence ID" value="NC_005042.1"/>
</dbReference>
<dbReference type="SMR" id="Q7VDH4"/>
<dbReference type="STRING" id="167539.Pro_0402"/>
<dbReference type="EnsemblBacteria" id="AAP99448">
    <property type="protein sequence ID" value="AAP99448"/>
    <property type="gene ID" value="Pro_0402"/>
</dbReference>
<dbReference type="KEGG" id="pma:Pro_0402"/>
<dbReference type="PATRIC" id="fig|167539.5.peg.410"/>
<dbReference type="eggNOG" id="COG0809">
    <property type="taxonomic scope" value="Bacteria"/>
</dbReference>
<dbReference type="HOGENOM" id="CLU_039110_1_0_3"/>
<dbReference type="OrthoDB" id="9805933at2"/>
<dbReference type="UniPathway" id="UPA00392"/>
<dbReference type="Proteomes" id="UP000001420">
    <property type="component" value="Chromosome"/>
</dbReference>
<dbReference type="GO" id="GO:0005737">
    <property type="term" value="C:cytoplasm"/>
    <property type="evidence" value="ECO:0007669"/>
    <property type="project" value="UniProtKB-SubCell"/>
</dbReference>
<dbReference type="GO" id="GO:0051075">
    <property type="term" value="F:S-adenosylmethionine:tRNA ribosyltransferase-isomerase activity"/>
    <property type="evidence" value="ECO:0007669"/>
    <property type="project" value="UniProtKB-EC"/>
</dbReference>
<dbReference type="GO" id="GO:0008616">
    <property type="term" value="P:queuosine biosynthetic process"/>
    <property type="evidence" value="ECO:0007669"/>
    <property type="project" value="UniProtKB-UniRule"/>
</dbReference>
<dbReference type="GO" id="GO:0002099">
    <property type="term" value="P:tRNA wobble guanine modification"/>
    <property type="evidence" value="ECO:0007669"/>
    <property type="project" value="TreeGrafter"/>
</dbReference>
<dbReference type="Gene3D" id="2.40.10.240">
    <property type="entry name" value="QueA-like"/>
    <property type="match status" value="1"/>
</dbReference>
<dbReference type="Gene3D" id="3.40.1780.10">
    <property type="entry name" value="QueA-like"/>
    <property type="match status" value="2"/>
</dbReference>
<dbReference type="HAMAP" id="MF_00113">
    <property type="entry name" value="QueA"/>
    <property type="match status" value="1"/>
</dbReference>
<dbReference type="InterPro" id="IPR003699">
    <property type="entry name" value="QueA"/>
</dbReference>
<dbReference type="InterPro" id="IPR042118">
    <property type="entry name" value="QueA_dom1"/>
</dbReference>
<dbReference type="InterPro" id="IPR042119">
    <property type="entry name" value="QueA_dom2"/>
</dbReference>
<dbReference type="InterPro" id="IPR036100">
    <property type="entry name" value="QueA_sf"/>
</dbReference>
<dbReference type="NCBIfam" id="NF001140">
    <property type="entry name" value="PRK00147.1"/>
    <property type="match status" value="1"/>
</dbReference>
<dbReference type="NCBIfam" id="TIGR00113">
    <property type="entry name" value="queA"/>
    <property type="match status" value="1"/>
</dbReference>
<dbReference type="PANTHER" id="PTHR30307">
    <property type="entry name" value="S-ADENOSYLMETHIONINE:TRNA RIBOSYLTRANSFERASE-ISOMERASE"/>
    <property type="match status" value="1"/>
</dbReference>
<dbReference type="PANTHER" id="PTHR30307:SF0">
    <property type="entry name" value="S-ADENOSYLMETHIONINE:TRNA RIBOSYLTRANSFERASE-ISOMERASE"/>
    <property type="match status" value="1"/>
</dbReference>
<dbReference type="Pfam" id="PF02547">
    <property type="entry name" value="Queuosine_synth"/>
    <property type="match status" value="1"/>
</dbReference>
<dbReference type="SUPFAM" id="SSF111337">
    <property type="entry name" value="QueA-like"/>
    <property type="match status" value="1"/>
</dbReference>